<evidence type="ECO:0000250" key="1"/>
<evidence type="ECO:0000269" key="2">
    <source>
    </source>
</evidence>
<evidence type="ECO:0000305" key="3"/>
<proteinExistence type="evidence at protein level"/>
<keyword id="KW-0028">Amino-acid biosynthesis</keyword>
<keyword id="KW-0903">Direct protein sequencing</keyword>
<keyword id="KW-0378">Hydrolase</keyword>
<keyword id="KW-1185">Reference proteome</keyword>
<keyword id="KW-0718">Serine biosynthesis</keyword>
<sequence length="203" mass="23548">MKRLYLVRHAQSEYNEKGIFQGRLDSDLTPLGFVQARLLAREFLKKKVDIIYSSPQRRAYKTALTISDMLGTQLVVDERLREMSFGEYEGKHFWSMLEAHKDVFLNWLSNPVKHPLPTQESMEEFEKRVRSFLEDVKSSHYQNMLIVAHGGTLHAIVCLLTGIGLENLWNIHMDNAGITEIHMEGEKSTLVYLNKLCHTRQLT</sequence>
<feature type="chain" id="PRO_0000416821" description="Putative phosphoserine phosphatase 2">
    <location>
        <begin position="1"/>
        <end position="203"/>
    </location>
</feature>
<feature type="active site" description="Tele-phosphohistidine intermediate" evidence="1">
    <location>
        <position position="9"/>
    </location>
</feature>
<feature type="active site" evidence="1">
    <location>
        <position position="149"/>
    </location>
</feature>
<feature type="site" description="Important for activity" evidence="1">
    <location>
        <position position="58"/>
    </location>
</feature>
<accession>D3DFP8</accession>
<name>PSPB_HYDTT</name>
<comment type="function">
    <text evidence="2">Part of a complex that catalyzes the dephosphorylation of L-phosphoserine to serine and inorganic phosphate. Is poorly or not active toward D-phosphoserine, DL-phosphothreonine, 3-phosphoglycerate, para-nitrophenylphosphate, and fructose-6-phosphate. Does not display phosphoglycerate mutase activity.</text>
</comment>
<comment type="catalytic activity">
    <reaction>
        <text>O-phospho-L-serine + H2O = L-serine + phosphate</text>
        <dbReference type="Rhea" id="RHEA:21208"/>
        <dbReference type="ChEBI" id="CHEBI:15377"/>
        <dbReference type="ChEBI" id="CHEBI:33384"/>
        <dbReference type="ChEBI" id="CHEBI:43474"/>
        <dbReference type="ChEBI" id="CHEBI:57524"/>
        <dbReference type="EC" id="3.1.3.3"/>
    </reaction>
</comment>
<comment type="catalytic activity">
    <reaction>
        <text>O-phospho-D-serine + H2O = D-serine + phosphate</text>
        <dbReference type="Rhea" id="RHEA:24873"/>
        <dbReference type="ChEBI" id="CHEBI:15377"/>
        <dbReference type="ChEBI" id="CHEBI:35247"/>
        <dbReference type="ChEBI" id="CHEBI:43474"/>
        <dbReference type="ChEBI" id="CHEBI:58680"/>
        <dbReference type="EC" id="3.1.3.3"/>
    </reaction>
</comment>
<comment type="activity regulation">
    <text evidence="2">Activity is not inhibited by EDTA in vitro, nor enhanced by the addition of Mg(2+).</text>
</comment>
<comment type="biophysicochemical properties">
    <kinetics>
        <KM>1.5 mM for O-phospho-L-serine</KM>
        <Vmax>32.0 umol/min/mg enzyme</Vmax>
    </kinetics>
</comment>
<comment type="pathway">
    <text evidence="2">Amino-acid biosynthesis; L-serine biosynthesis; L-serine from 3-phospho-D-glycerate: step 3/3.</text>
</comment>
<comment type="subunit">
    <text evidence="2">Heterodimer with PspA. The PspB subunit appears to have no or considerably lower PSP activity compared with that of PspA.</text>
</comment>
<comment type="similarity">
    <text evidence="3">Belongs to the histidine phosphatase superfamily. Metal-independent phosphoserine phosphatase family.</text>
</comment>
<dbReference type="EC" id="3.1.3.3"/>
<dbReference type="EMBL" id="AP011112">
    <property type="protein sequence ID" value="BAI68650.1"/>
    <property type="molecule type" value="Genomic_DNA"/>
</dbReference>
<dbReference type="EMBL" id="CP002221">
    <property type="protein sequence ID" value="ADO44594.1"/>
    <property type="molecule type" value="Genomic_DNA"/>
</dbReference>
<dbReference type="RefSeq" id="WP_012962833.1">
    <property type="nucleotide sequence ID" value="NC_013799.1"/>
</dbReference>
<dbReference type="SMR" id="D3DFP8"/>
<dbReference type="STRING" id="608538.HTH_0183"/>
<dbReference type="KEGG" id="hte:Hydth_0184"/>
<dbReference type="KEGG" id="hth:HTH_0183"/>
<dbReference type="PATRIC" id="fig|608538.5.peg.184"/>
<dbReference type="eggNOG" id="COG0406">
    <property type="taxonomic scope" value="Bacteria"/>
</dbReference>
<dbReference type="HOGENOM" id="CLU_033323_9_0_0"/>
<dbReference type="OrthoDB" id="9781415at2"/>
<dbReference type="BRENDA" id="3.1.3.3">
    <property type="organism ID" value="2722"/>
</dbReference>
<dbReference type="UniPathway" id="UPA00135">
    <property type="reaction ID" value="UER00198"/>
</dbReference>
<dbReference type="Proteomes" id="UP000002574">
    <property type="component" value="Chromosome"/>
</dbReference>
<dbReference type="GO" id="GO:0005737">
    <property type="term" value="C:cytoplasm"/>
    <property type="evidence" value="ECO:0007669"/>
    <property type="project" value="TreeGrafter"/>
</dbReference>
<dbReference type="GO" id="GO:0036424">
    <property type="term" value="F:L-phosphoserine phosphatase activity"/>
    <property type="evidence" value="ECO:0007669"/>
    <property type="project" value="RHEA"/>
</dbReference>
<dbReference type="GO" id="GO:0006564">
    <property type="term" value="P:L-serine biosynthetic process"/>
    <property type="evidence" value="ECO:0007669"/>
    <property type="project" value="UniProtKB-KW"/>
</dbReference>
<dbReference type="CDD" id="cd07067">
    <property type="entry name" value="HP_PGM_like"/>
    <property type="match status" value="1"/>
</dbReference>
<dbReference type="Gene3D" id="3.40.50.1240">
    <property type="entry name" value="Phosphoglycerate mutase-like"/>
    <property type="match status" value="1"/>
</dbReference>
<dbReference type="InterPro" id="IPR013078">
    <property type="entry name" value="His_Pase_superF_clade-1"/>
</dbReference>
<dbReference type="InterPro" id="IPR029033">
    <property type="entry name" value="His_PPase_superfam"/>
</dbReference>
<dbReference type="InterPro" id="IPR050275">
    <property type="entry name" value="PGM_Phosphatase"/>
</dbReference>
<dbReference type="PANTHER" id="PTHR48100">
    <property type="entry name" value="BROAD-SPECIFICITY PHOSPHATASE YOR283W-RELATED"/>
    <property type="match status" value="1"/>
</dbReference>
<dbReference type="PANTHER" id="PTHR48100:SF1">
    <property type="entry name" value="HISTIDINE PHOSPHATASE FAMILY PROTEIN-RELATED"/>
    <property type="match status" value="1"/>
</dbReference>
<dbReference type="Pfam" id="PF00300">
    <property type="entry name" value="His_Phos_1"/>
    <property type="match status" value="1"/>
</dbReference>
<dbReference type="PIRSF" id="PIRSF000709">
    <property type="entry name" value="6PFK_2-Ptase"/>
    <property type="match status" value="1"/>
</dbReference>
<dbReference type="SMART" id="SM00855">
    <property type="entry name" value="PGAM"/>
    <property type="match status" value="1"/>
</dbReference>
<dbReference type="SUPFAM" id="SSF53254">
    <property type="entry name" value="Phosphoglycerate mutase-like"/>
    <property type="match status" value="1"/>
</dbReference>
<gene>
    <name type="primary">pspB</name>
    <name type="ordered locus">HTH_0183</name>
    <name type="ordered locus">Hydth_0184</name>
</gene>
<organism>
    <name type="scientific">Hydrogenobacter thermophilus (strain DSM 6534 / IAM 12695 / TK-6)</name>
    <dbReference type="NCBI Taxonomy" id="608538"/>
    <lineage>
        <taxon>Bacteria</taxon>
        <taxon>Pseudomonadati</taxon>
        <taxon>Aquificota</taxon>
        <taxon>Aquificia</taxon>
        <taxon>Aquificales</taxon>
        <taxon>Aquificaceae</taxon>
        <taxon>Hydrogenobacter</taxon>
    </lineage>
</organism>
<reference key="1">
    <citation type="journal article" date="2010" name="J. Bacteriol.">
        <title>Complete genome sequence of the thermophilic, obligately chemolithoautotrophic hydrogen-oxidizing bacterium Hydrogenobacter thermophilus TK-6.</title>
        <authorList>
            <person name="Arai H."/>
            <person name="Kanbe H."/>
            <person name="Ishii M."/>
            <person name="Igarashi Y."/>
        </authorList>
    </citation>
    <scope>NUCLEOTIDE SEQUENCE [LARGE SCALE GENOMIC DNA]</scope>
    <source>
        <strain>DSM 6534 / IAM 12695 / TK-6</strain>
    </source>
</reference>
<reference key="2">
    <citation type="journal article" date="2011" name="Stand. Genomic Sci.">
        <title>Complete genome sequence of Hydrogenobacter thermophilus type strain (TK-6).</title>
        <authorList>
            <consortium name="US DOE Joint Genome Institute (JGI-PGF)"/>
            <person name="Zeytun A."/>
            <person name="Sikorski J."/>
            <person name="Nolan M."/>
            <person name="Lapidus A."/>
            <person name="Lucas S."/>
            <person name="Han J."/>
            <person name="Tice H."/>
            <person name="Cheng J.F."/>
            <person name="Tapia R."/>
            <person name="Goodwin L."/>
            <person name="Pitluck S."/>
            <person name="Liolios K."/>
            <person name="Ivanova N."/>
            <person name="Mavromatis K."/>
            <person name="Mikhailova N."/>
            <person name="Ovchinnikova G."/>
            <person name="Pati A."/>
            <person name="Chen A."/>
            <person name="Palaniappan K."/>
            <person name="Ngatchou-Djao O.D."/>
            <person name="Land M."/>
            <person name="Hauser L."/>
            <person name="Jeffries C.D."/>
            <person name="Han C."/>
            <person name="Detter J.C."/>
            <person name="Ubler S."/>
            <person name="Rohde M."/>
            <person name="Tindall B.J."/>
            <person name="Goker M."/>
            <person name="Wirth R."/>
            <person name="Woyke T."/>
            <person name="Bristow J."/>
            <person name="Eisen J.A."/>
            <person name="Markowitz V."/>
            <person name="Hugenholtz P."/>
            <person name="Klenk H.P."/>
            <person name="Kyrpides N.C."/>
        </authorList>
    </citation>
    <scope>NUCLEOTIDE SEQUENCE [LARGE SCALE GENOMIC DNA]</scope>
    <source>
        <strain>DSM 6534 / IAM 12695 / TK-6</strain>
    </source>
</reference>
<reference key="3">
    <citation type="journal article" date="2012" name="J. Biol. Chem.">
        <title>Discovery and analysis of cofactor-dependent phosphoglycerate mutase homologs as novel phosphoserine phosphatases in Hydrogenobacter thermophilus.</title>
        <authorList>
            <person name="Chiba Y."/>
            <person name="Oshima K."/>
            <person name="Arai H."/>
            <person name="Ishii M."/>
            <person name="Igarashi Y."/>
        </authorList>
    </citation>
    <scope>PROTEIN SEQUENCE OF 1-10</scope>
    <scope>FUNCTION</scope>
    <scope>LACK OF PHOSPHOGLYCERATE MUTASE ACTIVITY</scope>
    <scope>SUBSTRATE SPECIFICITY</scope>
    <scope>GENE NAME</scope>
    <scope>ACTIVITY REGULATION</scope>
    <scope>PATHWAY</scope>
    <scope>SUBUNIT</scope>
    <source>
        <strain>DSM 6534 / IAM 12695 / TK-6</strain>
    </source>
</reference>
<protein>
    <recommendedName>
        <fullName>Putative phosphoserine phosphatase 2</fullName>
        <shortName>PSP 2</shortName>
        <shortName>PSPase 2</shortName>
        <ecNumber>3.1.3.3</ecNumber>
    </recommendedName>
    <alternativeName>
        <fullName>Metal-independent phosphoserine phosphatase 2</fullName>
        <shortName>iPSP2</shortName>
    </alternativeName>
    <alternativeName>
        <fullName>O-phosphoserine phosphohydrolase 2</fullName>
    </alternativeName>
</protein>